<name>IF2_STRP3</name>
<dbReference type="EMBL" id="AE014074">
    <property type="protein sequence ID" value="AAM80102.1"/>
    <property type="status" value="ALT_INIT"/>
    <property type="molecule type" value="Genomic_DNA"/>
</dbReference>
<dbReference type="RefSeq" id="WP_011106624.1">
    <property type="nucleotide sequence ID" value="NC_004070.1"/>
</dbReference>
<dbReference type="SMR" id="P0DB84"/>
<dbReference type="KEGG" id="spg:SpyM3_1495"/>
<dbReference type="HOGENOM" id="CLU_006301_5_0_9"/>
<dbReference type="Proteomes" id="UP000000564">
    <property type="component" value="Chromosome"/>
</dbReference>
<dbReference type="GO" id="GO:0005829">
    <property type="term" value="C:cytosol"/>
    <property type="evidence" value="ECO:0007669"/>
    <property type="project" value="TreeGrafter"/>
</dbReference>
<dbReference type="GO" id="GO:0005525">
    <property type="term" value="F:GTP binding"/>
    <property type="evidence" value="ECO:0007669"/>
    <property type="project" value="UniProtKB-KW"/>
</dbReference>
<dbReference type="GO" id="GO:0003924">
    <property type="term" value="F:GTPase activity"/>
    <property type="evidence" value="ECO:0007669"/>
    <property type="project" value="UniProtKB-UniRule"/>
</dbReference>
<dbReference type="GO" id="GO:0003743">
    <property type="term" value="F:translation initiation factor activity"/>
    <property type="evidence" value="ECO:0007669"/>
    <property type="project" value="UniProtKB-UniRule"/>
</dbReference>
<dbReference type="CDD" id="cd01887">
    <property type="entry name" value="IF2_eIF5B"/>
    <property type="match status" value="1"/>
</dbReference>
<dbReference type="CDD" id="cd03702">
    <property type="entry name" value="IF2_mtIF2_II"/>
    <property type="match status" value="1"/>
</dbReference>
<dbReference type="CDD" id="cd03692">
    <property type="entry name" value="mtIF2_IVc"/>
    <property type="match status" value="1"/>
</dbReference>
<dbReference type="FunFam" id="2.40.30.10:FF:000007">
    <property type="entry name" value="Translation initiation factor IF-2"/>
    <property type="match status" value="1"/>
</dbReference>
<dbReference type="FunFam" id="2.40.30.10:FF:000008">
    <property type="entry name" value="Translation initiation factor IF-2"/>
    <property type="match status" value="1"/>
</dbReference>
<dbReference type="FunFam" id="3.40.50.10050:FF:000001">
    <property type="entry name" value="Translation initiation factor IF-2"/>
    <property type="match status" value="1"/>
</dbReference>
<dbReference type="FunFam" id="3.40.50.300:FF:000019">
    <property type="entry name" value="Translation initiation factor IF-2"/>
    <property type="match status" value="1"/>
</dbReference>
<dbReference type="Gene3D" id="1.10.10.2480">
    <property type="match status" value="1"/>
</dbReference>
<dbReference type="Gene3D" id="3.40.50.300">
    <property type="entry name" value="P-loop containing nucleotide triphosphate hydrolases"/>
    <property type="match status" value="1"/>
</dbReference>
<dbReference type="Gene3D" id="2.40.30.10">
    <property type="entry name" value="Translation factors"/>
    <property type="match status" value="2"/>
</dbReference>
<dbReference type="Gene3D" id="3.40.50.10050">
    <property type="entry name" value="Translation initiation factor IF- 2, domain 3"/>
    <property type="match status" value="1"/>
</dbReference>
<dbReference type="HAMAP" id="MF_00100_B">
    <property type="entry name" value="IF_2_B"/>
    <property type="match status" value="1"/>
</dbReference>
<dbReference type="InterPro" id="IPR053905">
    <property type="entry name" value="EF-G-like_DII"/>
</dbReference>
<dbReference type="InterPro" id="IPR044145">
    <property type="entry name" value="IF2_II"/>
</dbReference>
<dbReference type="InterPro" id="IPR006847">
    <property type="entry name" value="IF2_N"/>
</dbReference>
<dbReference type="InterPro" id="IPR027417">
    <property type="entry name" value="P-loop_NTPase"/>
</dbReference>
<dbReference type="InterPro" id="IPR005225">
    <property type="entry name" value="Small_GTP-bd"/>
</dbReference>
<dbReference type="InterPro" id="IPR000795">
    <property type="entry name" value="T_Tr_GTP-bd_dom"/>
</dbReference>
<dbReference type="InterPro" id="IPR000178">
    <property type="entry name" value="TF_IF2_bacterial-like"/>
</dbReference>
<dbReference type="InterPro" id="IPR015760">
    <property type="entry name" value="TIF_IF2"/>
</dbReference>
<dbReference type="InterPro" id="IPR023115">
    <property type="entry name" value="TIF_IF2_dom3"/>
</dbReference>
<dbReference type="InterPro" id="IPR036925">
    <property type="entry name" value="TIF_IF2_dom3_sf"/>
</dbReference>
<dbReference type="InterPro" id="IPR009000">
    <property type="entry name" value="Transl_B-barrel_sf"/>
</dbReference>
<dbReference type="NCBIfam" id="TIGR00487">
    <property type="entry name" value="IF-2"/>
    <property type="match status" value="1"/>
</dbReference>
<dbReference type="NCBIfam" id="TIGR00231">
    <property type="entry name" value="small_GTP"/>
    <property type="match status" value="1"/>
</dbReference>
<dbReference type="PANTHER" id="PTHR43381:SF5">
    <property type="entry name" value="TR-TYPE G DOMAIN-CONTAINING PROTEIN"/>
    <property type="match status" value="1"/>
</dbReference>
<dbReference type="PANTHER" id="PTHR43381">
    <property type="entry name" value="TRANSLATION INITIATION FACTOR IF-2-RELATED"/>
    <property type="match status" value="1"/>
</dbReference>
<dbReference type="Pfam" id="PF22042">
    <property type="entry name" value="EF-G_D2"/>
    <property type="match status" value="1"/>
</dbReference>
<dbReference type="Pfam" id="PF00009">
    <property type="entry name" value="GTP_EFTU"/>
    <property type="match status" value="1"/>
</dbReference>
<dbReference type="Pfam" id="PF11987">
    <property type="entry name" value="IF-2"/>
    <property type="match status" value="1"/>
</dbReference>
<dbReference type="Pfam" id="PF04760">
    <property type="entry name" value="IF2_N"/>
    <property type="match status" value="2"/>
</dbReference>
<dbReference type="PRINTS" id="PR00449">
    <property type="entry name" value="RASTRNSFRMNG"/>
</dbReference>
<dbReference type="SUPFAM" id="SSF52156">
    <property type="entry name" value="Initiation factor IF2/eIF5b, domain 3"/>
    <property type="match status" value="1"/>
</dbReference>
<dbReference type="SUPFAM" id="SSF52540">
    <property type="entry name" value="P-loop containing nucleoside triphosphate hydrolases"/>
    <property type="match status" value="1"/>
</dbReference>
<dbReference type="SUPFAM" id="SSF50447">
    <property type="entry name" value="Translation proteins"/>
    <property type="match status" value="2"/>
</dbReference>
<dbReference type="PROSITE" id="PS51722">
    <property type="entry name" value="G_TR_2"/>
    <property type="match status" value="1"/>
</dbReference>
<dbReference type="PROSITE" id="PS01176">
    <property type="entry name" value="IF2"/>
    <property type="match status" value="1"/>
</dbReference>
<feature type="chain" id="PRO_0000137266" description="Translation initiation factor IF-2">
    <location>
        <begin position="1"/>
        <end position="953"/>
    </location>
</feature>
<feature type="domain" description="tr-type G">
    <location>
        <begin position="454"/>
        <end position="623"/>
    </location>
</feature>
<feature type="region of interest" description="Disordered" evidence="3">
    <location>
        <begin position="48"/>
        <end position="212"/>
    </location>
</feature>
<feature type="region of interest" description="Disordered" evidence="3">
    <location>
        <begin position="279"/>
        <end position="367"/>
    </location>
</feature>
<feature type="region of interest" description="G1" evidence="1">
    <location>
        <begin position="463"/>
        <end position="470"/>
    </location>
</feature>
<feature type="region of interest" description="G2" evidence="1">
    <location>
        <begin position="488"/>
        <end position="492"/>
    </location>
</feature>
<feature type="region of interest" description="G3" evidence="1">
    <location>
        <begin position="509"/>
        <end position="512"/>
    </location>
</feature>
<feature type="region of interest" description="G4" evidence="1">
    <location>
        <begin position="563"/>
        <end position="566"/>
    </location>
</feature>
<feature type="region of interest" description="G5" evidence="1">
    <location>
        <begin position="599"/>
        <end position="601"/>
    </location>
</feature>
<feature type="compositionally biased region" description="Basic and acidic residues" evidence="3">
    <location>
        <begin position="80"/>
        <end position="89"/>
    </location>
</feature>
<feature type="compositionally biased region" description="Basic and acidic residues" evidence="3">
    <location>
        <begin position="98"/>
        <end position="111"/>
    </location>
</feature>
<feature type="compositionally biased region" description="Basic and acidic residues" evidence="3">
    <location>
        <begin position="140"/>
        <end position="188"/>
    </location>
</feature>
<feature type="compositionally biased region" description="Polar residues" evidence="3">
    <location>
        <begin position="191"/>
        <end position="207"/>
    </location>
</feature>
<feature type="compositionally biased region" description="Polar residues" evidence="3">
    <location>
        <begin position="282"/>
        <end position="291"/>
    </location>
</feature>
<feature type="compositionally biased region" description="Basic and acidic residues" evidence="3">
    <location>
        <begin position="300"/>
        <end position="317"/>
    </location>
</feature>
<feature type="compositionally biased region" description="Low complexity" evidence="3">
    <location>
        <begin position="322"/>
        <end position="338"/>
    </location>
</feature>
<feature type="compositionally biased region" description="Basic residues" evidence="3">
    <location>
        <begin position="339"/>
        <end position="348"/>
    </location>
</feature>
<feature type="binding site" evidence="2">
    <location>
        <begin position="463"/>
        <end position="470"/>
    </location>
    <ligand>
        <name>GTP</name>
        <dbReference type="ChEBI" id="CHEBI:37565"/>
    </ligand>
</feature>
<feature type="binding site" evidence="2">
    <location>
        <begin position="509"/>
        <end position="513"/>
    </location>
    <ligand>
        <name>GTP</name>
        <dbReference type="ChEBI" id="CHEBI:37565"/>
    </ligand>
</feature>
<feature type="binding site" evidence="2">
    <location>
        <begin position="563"/>
        <end position="566"/>
    </location>
    <ligand>
        <name>GTP</name>
        <dbReference type="ChEBI" id="CHEBI:37565"/>
    </ligand>
</feature>
<protein>
    <recommendedName>
        <fullName evidence="2">Translation initiation factor IF-2</fullName>
    </recommendedName>
</protein>
<reference key="1">
    <citation type="journal article" date="2002" name="Proc. Natl. Acad. Sci. U.S.A.">
        <title>Genome sequence of a serotype M3 strain of group A Streptococcus: phage-encoded toxins, the high-virulence phenotype, and clone emergence.</title>
        <authorList>
            <person name="Beres S.B."/>
            <person name="Sylva G.L."/>
            <person name="Barbian K.D."/>
            <person name="Lei B."/>
            <person name="Hoff J.S."/>
            <person name="Mammarella N.D."/>
            <person name="Liu M.-Y."/>
            <person name="Smoot J.C."/>
            <person name="Porcella S.F."/>
            <person name="Parkins L.D."/>
            <person name="Campbell D.S."/>
            <person name="Smith T.M."/>
            <person name="McCormick J.K."/>
            <person name="Leung D.Y.M."/>
            <person name="Schlievert P.M."/>
            <person name="Musser J.M."/>
        </authorList>
    </citation>
    <scope>NUCLEOTIDE SEQUENCE [LARGE SCALE GENOMIC DNA]</scope>
    <source>
        <strain>ATCC BAA-595 / MGAS315</strain>
    </source>
</reference>
<proteinExistence type="inferred from homology"/>
<organism>
    <name type="scientific">Streptococcus pyogenes serotype M3 (strain ATCC BAA-595 / MGAS315)</name>
    <dbReference type="NCBI Taxonomy" id="198466"/>
    <lineage>
        <taxon>Bacteria</taxon>
        <taxon>Bacillati</taxon>
        <taxon>Bacillota</taxon>
        <taxon>Bacilli</taxon>
        <taxon>Lactobacillales</taxon>
        <taxon>Streptococcaceae</taxon>
        <taxon>Streptococcus</taxon>
    </lineage>
</organism>
<gene>
    <name evidence="2" type="primary">infB</name>
    <name type="ordered locus">SpyM3_1495</name>
</gene>
<comment type="function">
    <text evidence="2">One of the essential components for the initiation of protein synthesis. Protects formylmethionyl-tRNA from spontaneous hydrolysis and promotes its binding to the 30S ribosomal subunits. Also involved in the hydrolysis of GTP during the formation of the 70S ribosomal complex.</text>
</comment>
<comment type="subcellular location">
    <subcellularLocation>
        <location evidence="2">Cytoplasm</location>
    </subcellularLocation>
</comment>
<comment type="similarity">
    <text evidence="2">Belongs to the TRAFAC class translation factor GTPase superfamily. Classic translation factor GTPase family. IF-2 subfamily.</text>
</comment>
<comment type="sequence caution" evidence="4">
    <conflict type="erroneous initiation">
        <sequence resource="EMBL-CDS" id="AAM80102"/>
    </conflict>
</comment>
<sequence length="953" mass="105508">MSKKRLHEIAKEIGKSSKEVVEHAKYLGLDVKSHASSVEEADAKKIISSFSKASKPDVTASQTVKPKEVAQPSVTVVKETGSEHVEKTQVSKPKSRNFKAEREARAKEQAARKQANGSSHRSQERRGGYRQPNNHQTNEQGDKRITHRSQGDTNDKRIERKASNVSPRHDNHQLVGDRNRSFAKENHKNGRFTNQKKQGRQEPQSKSPKIDFKARAAALKAEQNAEYSRQSETRFRAQQEAKRLAELARQEAKEAALKAQAEEMSHREAALKSIEEAETKLKSSNISAKSTADNRRKKQARPEKNRELTHHSQEGQKKNKKSWNSQNQVRNQKNSNWNKNKKTKKGKNAKNTNTAPKPVTERKFHELPKEFEYTEGMTVAEIAKRIKREPAEIVKKLFMMGVMATQNQSLDGDTIELLMVDYGIEAKAKVEVDDADIERFFEDENYLNPENIVERAPVVTIMGHVDHGKTTLLDTLRNSRVATGEAGGITQHIGAYQIEEAGKKITFLDTPGHAAFTSMRARGASVTDITILIVAADDGVMPQTIEAINHSKAAGVPIIVAINKIDKPGANPERVIAELAEYGIISTAWGGECEFVEISAKFNKNIDELLETVLLVAEVEELKADPTVRAIGTVIEARLDKGKGAIATLLVQQGTLHVQDPIVVGNTFGRVRAMVNDLGRRVKSAEPSTPVSITGLNETPMAGDHFAVYADEKAARAAGEERSKRALLKQRQNTQRVSLDNLFDTLKAGEIKTVNVIIKADVQGSVEALAASLVKIEVEGVRVNVVHSAVGAINESDVTLAEASNAVIIGFNVRPTPQARQQADTDDVEIRLHSIIYKVIEEVEEAMKGKLDPVYQEKILGEAIIRETFKVSKVGTIGGFMVINGKVTRDSSVRVIRDSVVIFDGKLASLKHYKDDVKEVGNAQEGGLMIENFNDLKVDDTIEAYIMEEIVRK</sequence>
<evidence type="ECO:0000250" key="1"/>
<evidence type="ECO:0000255" key="2">
    <source>
        <dbReference type="HAMAP-Rule" id="MF_00100"/>
    </source>
</evidence>
<evidence type="ECO:0000256" key="3">
    <source>
        <dbReference type="SAM" id="MobiDB-lite"/>
    </source>
</evidence>
<evidence type="ECO:0000305" key="4"/>
<accession>P0DB84</accession>
<accession>Q879I7</accession>
<accession>Q8K644</accession>
<keyword id="KW-0963">Cytoplasm</keyword>
<keyword id="KW-0342">GTP-binding</keyword>
<keyword id="KW-0396">Initiation factor</keyword>
<keyword id="KW-0547">Nucleotide-binding</keyword>
<keyword id="KW-0648">Protein biosynthesis</keyword>